<sequence length="152" mass="17494">MSYLDGLQQCVDSLQISIGTLSSSIDTLESGIHDFPRIKHILKVQRHFNLISEDELSARQAKFEEIVKPILSKAFQRLEDSISSLQRQEDSLKTKYELQEARLDMLKNRPATSAFSVTTESSEQLKAIIAKRQKLVYTLERYTLQLQQKRGH</sequence>
<gene>
    <name type="primary">spc19</name>
    <name type="ORF">SPCC1223.15c</name>
</gene>
<feature type="chain" id="PRO_0000142591" description="DASH complex subunit spc19">
    <location>
        <begin position="1"/>
        <end position="152"/>
    </location>
</feature>
<organism>
    <name type="scientific">Schizosaccharomyces pombe (strain 972 / ATCC 24843)</name>
    <name type="common">Fission yeast</name>
    <dbReference type="NCBI Taxonomy" id="284812"/>
    <lineage>
        <taxon>Eukaryota</taxon>
        <taxon>Fungi</taxon>
        <taxon>Dikarya</taxon>
        <taxon>Ascomycota</taxon>
        <taxon>Taphrinomycotina</taxon>
        <taxon>Schizosaccharomycetes</taxon>
        <taxon>Schizosaccharomycetales</taxon>
        <taxon>Schizosaccharomycetaceae</taxon>
        <taxon>Schizosaccharomyces</taxon>
    </lineage>
</organism>
<proteinExistence type="evidence at protein level"/>
<dbReference type="EMBL" id="CU329672">
    <property type="protein sequence ID" value="CAI94399.2"/>
    <property type="molecule type" value="Genomic_DNA"/>
</dbReference>
<dbReference type="RefSeq" id="XP_001713170.1">
    <property type="nucleotide sequence ID" value="XM_001713118.1"/>
</dbReference>
<dbReference type="SMR" id="Q50HP3"/>
<dbReference type="BioGRID" id="857864">
    <property type="interactions" value="137"/>
</dbReference>
<dbReference type="ComplexPortal" id="CPX-10081">
    <property type="entry name" value="DASH complex"/>
</dbReference>
<dbReference type="FunCoup" id="Q50HP3">
    <property type="interactions" value="45"/>
</dbReference>
<dbReference type="STRING" id="284812.Q50HP3"/>
<dbReference type="PaxDb" id="4896-SPCC1223.15c.1"/>
<dbReference type="EnsemblFungi" id="SPCC1223.15c.1">
    <property type="protein sequence ID" value="SPCC1223.15c.1:pep"/>
    <property type="gene ID" value="SPCC1223.15c"/>
</dbReference>
<dbReference type="PomBase" id="SPCC1223.15c">
    <property type="gene designation" value="spc19"/>
</dbReference>
<dbReference type="VEuPathDB" id="FungiDB:SPCC1223.15c"/>
<dbReference type="eggNOG" id="ENOG502SDEQ">
    <property type="taxonomic scope" value="Eukaryota"/>
</dbReference>
<dbReference type="HOGENOM" id="CLU_112993_0_0_1"/>
<dbReference type="InParanoid" id="Q50HP3"/>
<dbReference type="OMA" id="DCCEEAH"/>
<dbReference type="PhylomeDB" id="Q50HP3"/>
<dbReference type="PRO" id="PR:Q50HP3"/>
<dbReference type="Proteomes" id="UP000002485">
    <property type="component" value="Chromosome III"/>
</dbReference>
<dbReference type="GO" id="GO:0005737">
    <property type="term" value="C:cytoplasm"/>
    <property type="evidence" value="ECO:0007669"/>
    <property type="project" value="UniProtKB-KW"/>
</dbReference>
<dbReference type="GO" id="GO:0042729">
    <property type="term" value="C:DASH complex"/>
    <property type="evidence" value="ECO:0000314"/>
    <property type="project" value="PomBase"/>
</dbReference>
<dbReference type="GO" id="GO:0005876">
    <property type="term" value="C:spindle microtubule"/>
    <property type="evidence" value="ECO:0007669"/>
    <property type="project" value="InterPro"/>
</dbReference>
<dbReference type="GO" id="GO:0008608">
    <property type="term" value="P:attachment of spindle microtubules to kinetochore"/>
    <property type="evidence" value="ECO:0000250"/>
    <property type="project" value="UniProtKB"/>
</dbReference>
<dbReference type="GO" id="GO:0051301">
    <property type="term" value="P:cell division"/>
    <property type="evidence" value="ECO:0007669"/>
    <property type="project" value="UniProtKB-KW"/>
</dbReference>
<dbReference type="GO" id="GO:1990758">
    <property type="term" value="P:mitotic sister chromatid biorientation"/>
    <property type="evidence" value="ECO:0000269"/>
    <property type="project" value="UniProtKB"/>
</dbReference>
<dbReference type="GO" id="GO:1990976">
    <property type="term" value="P:protein transport along microtubule to mitotic spindle pole body"/>
    <property type="evidence" value="ECO:0000250"/>
    <property type="project" value="UniProtKB"/>
</dbReference>
<dbReference type="GO" id="GO:0051455">
    <property type="term" value="P:spindle attachment to meiosis I kinetochore"/>
    <property type="evidence" value="ECO:0000305"/>
    <property type="project" value="PomBase"/>
</dbReference>
<dbReference type="InterPro" id="IPR013251">
    <property type="entry name" value="DASH_Spc19"/>
</dbReference>
<dbReference type="PANTHER" id="PTHR28262">
    <property type="entry name" value="DASH COMPLEX SUBUNIT SPC19"/>
    <property type="match status" value="1"/>
</dbReference>
<dbReference type="PANTHER" id="PTHR28262:SF1">
    <property type="entry name" value="DASH COMPLEX SUBUNIT SPC19"/>
    <property type="match status" value="1"/>
</dbReference>
<dbReference type="Pfam" id="PF08287">
    <property type="entry name" value="DASH_Spc19"/>
    <property type="match status" value="1"/>
</dbReference>
<comment type="function">
    <text evidence="2 3 4">Component of the DASH complex that connects microtubules with kinetochores and couples microtubule depolymerisation to chromosome movement; it is involved in retrieving kinetochores to the spindle poles before their re-orientation on the spindle in early mitosis and allows microtubule depolymerization to pull chromosomes apart and resist detachment during anaphase (PubMed:16079914, PubMed:20624975). Kinetochores, consisting of a centromere-associated inner segment and a microtubule-contacting outer segment, play a crucial role in chromosome segregation by mediating the physical connection between centromeric DNA and microtubules (PubMed:16079914, PubMed:20624975). Kinetochores also serve as an input point for the spindle assembly checkpoint, which delays anaphase until all chromosomes have bioriented on the mitotic spindle (PubMed:16079914). The DASH complex mediates bipolar kinetochore-microtubule attachments and facilitates the formation of additional interactions between outer kinetochore components and spindle microtubules (PubMed:16079914). During chromosome movement along the microtubule, it is required both for the sliding of kinetochores along the lateral side of the microtubule and also for microtubule end-on pulling on the kinetochore (PubMed:18256284). Modulates cytoplasmic microtubule dynamics by tracking the plus-end of shortening microtubules and slowing their depolymerization (PubMed:20624975).</text>
</comment>
<comment type="subunit">
    <text evidence="1 2 4">Component of the DASH complex consisting of ask1, dad1, dad2, dad3, dad4, dam1, duo1, dad5, spc19 and spc34, with a stoichiometry of one copy of each subunit per complex (PubMed:16079914). Multiple DASH complexes oligomerize to form a ring that encircles spindle microtubules and organizes the rod-like NDC80 complexes of the outer kinetochore (By similarity). DASH complex oligomerization strengthens microtubule attachments (By similarity). On cytoplasmic microtubules, DASH complexes appear to form patches instead of rings (PubMed:20624975).</text>
</comment>
<comment type="subcellular location">
    <subcellularLocation>
        <location evidence="1">Nucleus</location>
    </subcellularLocation>
    <subcellularLocation>
        <location evidence="1">Cytoplasm</location>
        <location evidence="1">Cytoskeleton</location>
        <location evidence="1">Spindle</location>
    </subcellularLocation>
    <subcellularLocation>
        <location evidence="1">Chromosome</location>
        <location evidence="1">Centromere</location>
        <location evidence="1">Kinetochore</location>
    </subcellularLocation>
    <subcellularLocation>
        <location evidence="6">Cytoplasm</location>
        <location evidence="6">Cytoskeleton</location>
    </subcellularLocation>
    <text evidence="1 6">Associates with the mitotic spindle and the kinetochore. Kinetochore association occurs only during mitosis (By similarity). In the cytoskeleton, localizes to cortical microtubules (Probable).</text>
</comment>
<comment type="similarity">
    <text evidence="5">Belongs to the DASH complex SPC19 family.</text>
</comment>
<keyword id="KW-0131">Cell cycle</keyword>
<keyword id="KW-0132">Cell division</keyword>
<keyword id="KW-0137">Centromere</keyword>
<keyword id="KW-0158">Chromosome</keyword>
<keyword id="KW-0159">Chromosome partition</keyword>
<keyword id="KW-0963">Cytoplasm</keyword>
<keyword id="KW-0206">Cytoskeleton</keyword>
<keyword id="KW-0995">Kinetochore</keyword>
<keyword id="KW-0493">Microtubule</keyword>
<keyword id="KW-0498">Mitosis</keyword>
<keyword id="KW-0539">Nucleus</keyword>
<keyword id="KW-1185">Reference proteome</keyword>
<name>SPC19_SCHPO</name>
<accession>Q50HP3</accession>
<protein>
    <recommendedName>
        <fullName>DASH complex subunit spc19</fullName>
    </recommendedName>
    <alternativeName>
        <fullName>Outer kinetochore protein spc19</fullName>
    </alternativeName>
</protein>
<reference key="1">
    <citation type="journal article" date="2005" name="EMBO J.">
        <title>Molecular analysis of kinetochore architecture in fission yeast.</title>
        <authorList>
            <person name="Liu X."/>
            <person name="McLeod I."/>
            <person name="Anderson S."/>
            <person name="Yates J.R. III"/>
            <person name="He X."/>
        </authorList>
    </citation>
    <scope>NUCLEOTIDE SEQUENCE</scope>
    <scope>FUNCTION</scope>
    <scope>IDENTIFICATION IN THE DASH COMPLEX</scope>
</reference>
<reference key="2">
    <citation type="journal article" date="2002" name="Nature">
        <title>The genome sequence of Schizosaccharomyces pombe.</title>
        <authorList>
            <person name="Wood V."/>
            <person name="Gwilliam R."/>
            <person name="Rajandream M.A."/>
            <person name="Lyne M.H."/>
            <person name="Lyne R."/>
            <person name="Stewart A."/>
            <person name="Sgouros J.G."/>
            <person name="Peat N."/>
            <person name="Hayles J."/>
            <person name="Baker S.G."/>
            <person name="Basham D."/>
            <person name="Bowman S."/>
            <person name="Brooks K."/>
            <person name="Brown D."/>
            <person name="Brown S."/>
            <person name="Chillingworth T."/>
            <person name="Churcher C.M."/>
            <person name="Collins M."/>
            <person name="Connor R."/>
            <person name="Cronin A."/>
            <person name="Davis P."/>
            <person name="Feltwell T."/>
            <person name="Fraser A."/>
            <person name="Gentles S."/>
            <person name="Goble A."/>
            <person name="Hamlin N."/>
            <person name="Harris D.E."/>
            <person name="Hidalgo J."/>
            <person name="Hodgson G."/>
            <person name="Holroyd S."/>
            <person name="Hornsby T."/>
            <person name="Howarth S."/>
            <person name="Huckle E.J."/>
            <person name="Hunt S."/>
            <person name="Jagels K."/>
            <person name="James K.D."/>
            <person name="Jones L."/>
            <person name="Jones M."/>
            <person name="Leather S."/>
            <person name="McDonald S."/>
            <person name="McLean J."/>
            <person name="Mooney P."/>
            <person name="Moule S."/>
            <person name="Mungall K.L."/>
            <person name="Murphy L.D."/>
            <person name="Niblett D."/>
            <person name="Odell C."/>
            <person name="Oliver K."/>
            <person name="O'Neil S."/>
            <person name="Pearson D."/>
            <person name="Quail M.A."/>
            <person name="Rabbinowitsch E."/>
            <person name="Rutherford K.M."/>
            <person name="Rutter S."/>
            <person name="Saunders D."/>
            <person name="Seeger K."/>
            <person name="Sharp S."/>
            <person name="Skelton J."/>
            <person name="Simmonds M.N."/>
            <person name="Squares R."/>
            <person name="Squares S."/>
            <person name="Stevens K."/>
            <person name="Taylor K."/>
            <person name="Taylor R.G."/>
            <person name="Tivey A."/>
            <person name="Walsh S.V."/>
            <person name="Warren T."/>
            <person name="Whitehead S."/>
            <person name="Woodward J.R."/>
            <person name="Volckaert G."/>
            <person name="Aert R."/>
            <person name="Robben J."/>
            <person name="Grymonprez B."/>
            <person name="Weltjens I."/>
            <person name="Vanstreels E."/>
            <person name="Rieger M."/>
            <person name="Schaefer M."/>
            <person name="Mueller-Auer S."/>
            <person name="Gabel C."/>
            <person name="Fuchs M."/>
            <person name="Duesterhoeft A."/>
            <person name="Fritzc C."/>
            <person name="Holzer E."/>
            <person name="Moestl D."/>
            <person name="Hilbert H."/>
            <person name="Borzym K."/>
            <person name="Langer I."/>
            <person name="Beck A."/>
            <person name="Lehrach H."/>
            <person name="Reinhardt R."/>
            <person name="Pohl T.M."/>
            <person name="Eger P."/>
            <person name="Zimmermann W."/>
            <person name="Wedler H."/>
            <person name="Wambutt R."/>
            <person name="Purnelle B."/>
            <person name="Goffeau A."/>
            <person name="Cadieu E."/>
            <person name="Dreano S."/>
            <person name="Gloux S."/>
            <person name="Lelaure V."/>
            <person name="Mottier S."/>
            <person name="Galibert F."/>
            <person name="Aves S.J."/>
            <person name="Xiang Z."/>
            <person name="Hunt C."/>
            <person name="Moore K."/>
            <person name="Hurst S.M."/>
            <person name="Lucas M."/>
            <person name="Rochet M."/>
            <person name="Gaillardin C."/>
            <person name="Tallada V.A."/>
            <person name="Garzon A."/>
            <person name="Thode G."/>
            <person name="Daga R.R."/>
            <person name="Cruzado L."/>
            <person name="Jimenez J."/>
            <person name="Sanchez M."/>
            <person name="del Rey F."/>
            <person name="Benito J."/>
            <person name="Dominguez A."/>
            <person name="Revuelta J.L."/>
            <person name="Moreno S."/>
            <person name="Armstrong J."/>
            <person name="Forsburg S.L."/>
            <person name="Cerutti L."/>
            <person name="Lowe T."/>
            <person name="McCombie W.R."/>
            <person name="Paulsen I."/>
            <person name="Potashkin J."/>
            <person name="Shpakovski G.V."/>
            <person name="Ussery D."/>
            <person name="Barrell B.G."/>
            <person name="Nurse P."/>
        </authorList>
    </citation>
    <scope>NUCLEOTIDE SEQUENCE [LARGE SCALE GENOMIC DNA]</scope>
    <source>
        <strain>972 / ATCC 24843</strain>
    </source>
</reference>
<reference key="3">
    <citation type="journal article" date="2008" name="Mol. Biol. Cell">
        <title>Sister kinetochore recapture in fission yeast occurs by two distinct mechanisms, both requiring Dam1 and Klp2.</title>
        <authorList>
            <person name="Gachet Y."/>
            <person name="Reyes C."/>
            <person name="Courtheoux T."/>
            <person name="Goldstone S."/>
            <person name="Gay G."/>
            <person name="Serrurier C."/>
            <person name="Tournier S."/>
        </authorList>
    </citation>
    <scope>FUNCTION</scope>
</reference>
<reference key="4">
    <citation type="journal article" date="2010" name="Proc. Natl. Acad. Sci. U.S.A.">
        <title>A non-ring-like form of the Dam1 complex modulates microtubule dynamics in fission yeast.</title>
        <authorList>
            <person name="Gao Q."/>
            <person name="Courtheoux T."/>
            <person name="Gachet Y."/>
            <person name="Tournier S."/>
            <person name="He X."/>
        </authorList>
    </citation>
    <scope>FUNCTION</scope>
    <scope>SUBUNIT</scope>
    <scope>SUBCELLULAR LOCATION</scope>
</reference>
<evidence type="ECO:0000250" key="1">
    <source>
        <dbReference type="UniProtKB" id="Q03954"/>
    </source>
</evidence>
<evidence type="ECO:0000269" key="2">
    <source>
    </source>
</evidence>
<evidence type="ECO:0000269" key="3">
    <source>
    </source>
</evidence>
<evidence type="ECO:0000269" key="4">
    <source>
    </source>
</evidence>
<evidence type="ECO:0000305" key="5"/>
<evidence type="ECO:0000305" key="6">
    <source>
    </source>
</evidence>